<feature type="chain" id="PRO_0000051257" description="Transcription initiation factor TFIID subunit 5">
    <location>
        <begin position="1"/>
        <end position="800"/>
    </location>
</feature>
<feature type="domain" description="LisH" evidence="2">
    <location>
        <begin position="92"/>
        <end position="124"/>
    </location>
</feature>
<feature type="repeat" description="WD 1" evidence="1">
    <location>
        <begin position="468"/>
        <end position="507"/>
    </location>
</feature>
<feature type="repeat" description="WD 2" evidence="1">
    <location>
        <begin position="541"/>
        <end position="580"/>
    </location>
</feature>
<feature type="repeat" description="WD 3" evidence="1">
    <location>
        <begin position="583"/>
        <end position="624"/>
    </location>
</feature>
<feature type="repeat" description="WD 4" evidence="1">
    <location>
        <begin position="625"/>
        <end position="666"/>
    </location>
</feature>
<feature type="repeat" description="WD 5" evidence="1">
    <location>
        <begin position="667"/>
        <end position="706"/>
    </location>
</feature>
<feature type="repeat" description="WD 6" evidence="1">
    <location>
        <begin position="709"/>
        <end position="748"/>
    </location>
</feature>
<feature type="region of interest" description="Disordered" evidence="3">
    <location>
        <begin position="1"/>
        <end position="74"/>
    </location>
</feature>
<feature type="region of interest" description="Disordered" evidence="3">
    <location>
        <begin position="153"/>
        <end position="189"/>
    </location>
</feature>
<feature type="region of interest" description="NTD2; involved in homo-dimerization; also involved in TFIID-TFIIF contacts in the RNA Pol II pre-initiation complex (PIC)" evidence="15 17">
    <location>
        <begin position="194"/>
        <end position="340"/>
    </location>
</feature>
<feature type="region of interest" description="Disordered" evidence="3">
    <location>
        <begin position="384"/>
        <end position="438"/>
    </location>
</feature>
<feature type="compositionally biased region" description="Gly residues" evidence="3">
    <location>
        <begin position="30"/>
        <end position="50"/>
    </location>
</feature>
<feature type="compositionally biased region" description="Low complexity" evidence="3">
    <location>
        <begin position="165"/>
        <end position="189"/>
    </location>
</feature>
<feature type="compositionally biased region" description="Acidic residues" evidence="3">
    <location>
        <begin position="384"/>
        <end position="395"/>
    </location>
</feature>
<feature type="compositionally biased region" description="Basic and acidic residues" evidence="3">
    <location>
        <begin position="407"/>
        <end position="418"/>
    </location>
</feature>
<feature type="splice variant" id="VSP_006787" description="In isoform Short." evidence="14">
    <location>
        <begin position="556"/>
        <end position="610"/>
    </location>
</feature>
<feature type="sequence variant" id="VAR_018462" description="In dbSNP:rs10883859." evidence="6 10 12 13">
    <original>S</original>
    <variation>A</variation>
    <location>
        <position position="130"/>
    </location>
</feature>
<feature type="sequence conflict" description="In Ref. 1; CAA64777 and 5; BAD97335." evidence="16" ref="1 5">
    <original>A</original>
    <variation>T</variation>
    <location>
        <position position="126"/>
    </location>
</feature>
<feature type="sequence conflict" description="In Ref. 1; CAA64777." evidence="16" ref="1">
    <original>F</original>
    <variation>L</variation>
    <location>
        <position position="300"/>
    </location>
</feature>
<feature type="sequence conflict" description="In Ref. 1; CAA64777." evidence="16" ref="1">
    <original>P</original>
    <variation>S</variation>
    <location>
        <position position="455"/>
    </location>
</feature>
<feature type="sequence conflict" description="In Ref. 1; CAA64777." evidence="16" ref="1">
    <original>A</original>
    <variation>V</variation>
    <location>
        <position position="469"/>
    </location>
</feature>
<feature type="sequence conflict" description="In Ref. 1; CAA64777." evidence="16" ref="1">
    <location>
        <position position="778"/>
    </location>
</feature>
<feature type="sequence conflict" description="In Ref. 8; AAH52268." evidence="16" ref="8">
    <original>R</original>
    <variation>L</variation>
    <location>
        <position position="787"/>
    </location>
</feature>
<feature type="helix" evidence="27">
    <location>
        <begin position="198"/>
        <end position="202"/>
    </location>
</feature>
<feature type="helix" evidence="27">
    <location>
        <begin position="203"/>
        <end position="205"/>
    </location>
</feature>
<feature type="helix" evidence="28">
    <location>
        <begin position="211"/>
        <end position="213"/>
    </location>
</feature>
<feature type="helix" evidence="27">
    <location>
        <begin position="214"/>
        <end position="226"/>
    </location>
</feature>
<feature type="helix" evidence="27">
    <location>
        <begin position="230"/>
        <end position="236"/>
    </location>
</feature>
<feature type="helix" evidence="27">
    <location>
        <begin position="237"/>
        <end position="239"/>
    </location>
</feature>
<feature type="helix" evidence="27">
    <location>
        <begin position="240"/>
        <end position="253"/>
    </location>
</feature>
<feature type="helix" evidence="27">
    <location>
        <begin position="257"/>
        <end position="267"/>
    </location>
</feature>
<feature type="helix" evidence="27">
    <location>
        <begin position="268"/>
        <end position="270"/>
    </location>
</feature>
<feature type="helix" evidence="27">
    <location>
        <begin position="273"/>
        <end position="275"/>
    </location>
</feature>
<feature type="helix" evidence="27">
    <location>
        <begin position="276"/>
        <end position="283"/>
    </location>
</feature>
<feature type="helix" evidence="27">
    <location>
        <begin position="288"/>
        <end position="291"/>
    </location>
</feature>
<feature type="turn" evidence="30">
    <location>
        <begin position="292"/>
        <end position="294"/>
    </location>
</feature>
<feature type="helix" evidence="27">
    <location>
        <begin position="295"/>
        <end position="300"/>
    </location>
</feature>
<feature type="helix" evidence="27">
    <location>
        <begin position="302"/>
        <end position="304"/>
    </location>
</feature>
<feature type="strand" evidence="27">
    <location>
        <begin position="305"/>
        <end position="310"/>
    </location>
</feature>
<feature type="helix" evidence="27">
    <location>
        <begin position="311"/>
        <end position="321"/>
    </location>
</feature>
<feature type="helix" evidence="28">
    <location>
        <begin position="324"/>
        <end position="326"/>
    </location>
</feature>
<feature type="helix" evidence="27">
    <location>
        <begin position="328"/>
        <end position="335"/>
    </location>
</feature>
<feature type="strand" evidence="27">
    <location>
        <begin position="338"/>
        <end position="342"/>
    </location>
</feature>
<feature type="helix" evidence="28">
    <location>
        <begin position="349"/>
        <end position="355"/>
    </location>
</feature>
<feature type="strand" evidence="28">
    <location>
        <begin position="359"/>
        <end position="362"/>
    </location>
</feature>
<feature type="helix" evidence="28">
    <location>
        <begin position="365"/>
        <end position="368"/>
    </location>
</feature>
<feature type="turn" evidence="30">
    <location>
        <begin position="424"/>
        <end position="428"/>
    </location>
</feature>
<feature type="helix" evidence="28">
    <location>
        <begin position="434"/>
        <end position="447"/>
    </location>
</feature>
<feature type="turn" evidence="30">
    <location>
        <begin position="454"/>
        <end position="456"/>
    </location>
</feature>
<feature type="strand" evidence="28">
    <location>
        <begin position="460"/>
        <end position="465"/>
    </location>
</feature>
<feature type="helix" evidence="28">
    <location>
        <begin position="466"/>
        <end position="469"/>
    </location>
</feature>
<feature type="strand" evidence="28">
    <location>
        <begin position="473"/>
        <end position="478"/>
    </location>
</feature>
<feature type="strand" evidence="28">
    <location>
        <begin position="484"/>
        <end position="489"/>
    </location>
</feature>
<feature type="strand" evidence="28">
    <location>
        <begin position="494"/>
        <end position="498"/>
    </location>
</feature>
<feature type="strand" evidence="28">
    <location>
        <begin position="500"/>
        <end position="505"/>
    </location>
</feature>
<feature type="helix" evidence="28">
    <location>
        <begin position="510"/>
        <end position="513"/>
    </location>
</feature>
<feature type="helix" evidence="28">
    <location>
        <begin position="514"/>
        <end position="517"/>
    </location>
</feature>
<feature type="strand" evidence="28">
    <location>
        <begin position="518"/>
        <end position="520"/>
    </location>
</feature>
<feature type="helix" evidence="28">
    <location>
        <begin position="522"/>
        <end position="527"/>
    </location>
</feature>
<feature type="strand" evidence="29">
    <location>
        <begin position="528"/>
        <end position="531"/>
    </location>
</feature>
<feature type="strand" evidence="28">
    <location>
        <begin position="534"/>
        <end position="539"/>
    </location>
</feature>
<feature type="strand" evidence="28">
    <location>
        <begin position="546"/>
        <end position="551"/>
    </location>
</feature>
<feature type="strand" evidence="28">
    <location>
        <begin position="555"/>
        <end position="562"/>
    </location>
</feature>
<feature type="strand" evidence="28">
    <location>
        <begin position="565"/>
        <end position="571"/>
    </location>
</feature>
<feature type="turn" evidence="28">
    <location>
        <begin position="572"/>
        <end position="574"/>
    </location>
</feature>
<feature type="strand" evidence="28">
    <location>
        <begin position="576"/>
        <end position="582"/>
    </location>
</feature>
<feature type="strand" evidence="28">
    <location>
        <begin position="588"/>
        <end position="593"/>
    </location>
</feature>
<feature type="strand" evidence="28">
    <location>
        <begin position="597"/>
        <end position="604"/>
    </location>
</feature>
<feature type="strand" evidence="28">
    <location>
        <begin position="607"/>
        <end position="613"/>
    </location>
</feature>
<feature type="strand" evidence="28">
    <location>
        <begin position="620"/>
        <end position="624"/>
    </location>
</feature>
<feature type="strand" evidence="28">
    <location>
        <begin position="630"/>
        <end position="635"/>
    </location>
</feature>
<feature type="strand" evidence="28">
    <location>
        <begin position="639"/>
        <end position="646"/>
    </location>
</feature>
<feature type="strand" evidence="28">
    <location>
        <begin position="649"/>
        <end position="655"/>
    </location>
</feature>
<feature type="turn" evidence="28">
    <location>
        <begin position="656"/>
        <end position="658"/>
    </location>
</feature>
<feature type="strand" evidence="28">
    <location>
        <begin position="661"/>
        <end position="666"/>
    </location>
</feature>
<feature type="strand" evidence="28">
    <location>
        <begin position="672"/>
        <end position="677"/>
    </location>
</feature>
<feature type="strand" evidence="28">
    <location>
        <begin position="681"/>
        <end position="688"/>
    </location>
</feature>
<feature type="strand" evidence="28">
    <location>
        <begin position="693"/>
        <end position="697"/>
    </location>
</feature>
<feature type="turn" evidence="28">
    <location>
        <begin position="698"/>
        <end position="701"/>
    </location>
</feature>
<feature type="strand" evidence="28">
    <location>
        <begin position="702"/>
        <end position="707"/>
    </location>
</feature>
<feature type="strand" evidence="28">
    <location>
        <begin position="714"/>
        <end position="719"/>
    </location>
</feature>
<feature type="strand" evidence="28">
    <location>
        <begin position="723"/>
        <end position="730"/>
    </location>
</feature>
<feature type="strand" evidence="28">
    <location>
        <begin position="733"/>
        <end position="739"/>
    </location>
</feature>
<feature type="helix" evidence="28">
    <location>
        <begin position="740"/>
        <end position="743"/>
    </location>
</feature>
<feature type="turn" evidence="28">
    <location>
        <begin position="744"/>
        <end position="746"/>
    </location>
</feature>
<feature type="helix" evidence="28">
    <location>
        <begin position="765"/>
        <end position="768"/>
    </location>
</feature>
<feature type="strand" evidence="28">
    <location>
        <begin position="769"/>
        <end position="774"/>
    </location>
</feature>
<feature type="strand" evidence="28">
    <location>
        <begin position="780"/>
        <end position="785"/>
    </location>
</feature>
<feature type="strand" evidence="29">
    <location>
        <begin position="787"/>
        <end position="789"/>
    </location>
</feature>
<feature type="strand" evidence="28">
    <location>
        <begin position="790"/>
        <end position="795"/>
    </location>
</feature>
<protein>
    <recommendedName>
        <fullName>Transcription initiation factor TFIID subunit 5</fullName>
    </recommendedName>
    <alternativeName>
        <fullName>Transcription initiation factor TFIID 100 kDa subunit</fullName>
        <shortName>TAF(II)100</shortName>
        <shortName>TAFII-100</shortName>
        <shortName>TAFII100</shortName>
    </alternativeName>
</protein>
<accession>Q15542</accession>
<accession>A8K5B4</accession>
<accession>B2RMR0</accession>
<accession>B7ZKJ6</accession>
<accession>Q53EM4</accession>
<accession>Q5SYD5</accession>
<accession>Q86UZ7</accession>
<accession>Q9Y4K5</accession>
<proteinExistence type="evidence at protein level"/>
<dbReference type="EMBL" id="X95525">
    <property type="protein sequence ID" value="CAA64777.1"/>
    <property type="molecule type" value="mRNA"/>
</dbReference>
<dbReference type="EMBL" id="U75309">
    <property type="protein sequence ID" value="AAC50902.1"/>
    <property type="status" value="ALT_INIT"/>
    <property type="molecule type" value="mRNA"/>
</dbReference>
<dbReference type="EMBL" id="U80191">
    <property type="protein sequence ID" value="AAC51215.1"/>
    <property type="molecule type" value="mRNA"/>
</dbReference>
<dbReference type="EMBL" id="AK223615">
    <property type="protein sequence ID" value="BAD97335.1"/>
    <property type="status" value="ALT_INIT"/>
    <property type="molecule type" value="mRNA"/>
</dbReference>
<dbReference type="EMBL" id="AK291229">
    <property type="protein sequence ID" value="BAF83918.1"/>
    <property type="molecule type" value="mRNA"/>
</dbReference>
<dbReference type="EMBL" id="AL591408">
    <property type="status" value="NOT_ANNOTATED_CDS"/>
    <property type="molecule type" value="Genomic_DNA"/>
</dbReference>
<dbReference type="EMBL" id="CH471066">
    <property type="protein sequence ID" value="EAW49645.1"/>
    <property type="molecule type" value="Genomic_DNA"/>
</dbReference>
<dbReference type="EMBL" id="CH471066">
    <property type="protein sequence ID" value="EAW49646.1"/>
    <property type="molecule type" value="Genomic_DNA"/>
</dbReference>
<dbReference type="EMBL" id="BC052268">
    <property type="protein sequence ID" value="AAH52268.2"/>
    <property type="molecule type" value="mRNA"/>
</dbReference>
<dbReference type="EMBL" id="BC136340">
    <property type="protein sequence ID" value="AAI36341.1"/>
    <property type="molecule type" value="mRNA"/>
</dbReference>
<dbReference type="EMBL" id="BC136348">
    <property type="protein sequence ID" value="AAI36349.1"/>
    <property type="molecule type" value="mRNA"/>
</dbReference>
<dbReference type="CCDS" id="CCDS7547.1">
    <molecule id="Q15542-1"/>
</dbReference>
<dbReference type="CCDS" id="CCDS91341.1">
    <molecule id="Q15542-2"/>
</dbReference>
<dbReference type="RefSeq" id="NP_008882.2">
    <molecule id="Q15542-1"/>
    <property type="nucleotide sequence ID" value="NM_006951.4"/>
</dbReference>
<dbReference type="RefSeq" id="NP_620640.1">
    <molecule id="Q15542-2"/>
    <property type="nucleotide sequence ID" value="NM_139052.3"/>
</dbReference>
<dbReference type="PDB" id="2NXP">
    <property type="method" value="X-ray"/>
    <property type="resolution" value="2.17 A"/>
    <property type="chains" value="A/B/C/D/E/F/G/H=188-343"/>
</dbReference>
<dbReference type="PDB" id="6F3T">
    <property type="method" value="X-ray"/>
    <property type="resolution" value="2.50 A"/>
    <property type="chains" value="A/B/C/D=194-800"/>
</dbReference>
<dbReference type="PDB" id="6MZC">
    <property type="method" value="EM"/>
    <property type="resolution" value="4.50 A"/>
    <property type="chains" value="G=1-800"/>
</dbReference>
<dbReference type="PDB" id="6MZD">
    <property type="method" value="EM"/>
    <property type="resolution" value="9.80 A"/>
    <property type="chains" value="F=1-800"/>
</dbReference>
<dbReference type="PDB" id="6MZL">
    <property type="method" value="EM"/>
    <property type="resolution" value="23.00 A"/>
    <property type="chains" value="F/G=1-800"/>
</dbReference>
<dbReference type="PDB" id="6MZM">
    <property type="method" value="EM"/>
    <property type="resolution" value="7.50 A"/>
    <property type="chains" value="G=1-800"/>
</dbReference>
<dbReference type="PDB" id="7EDX">
    <property type="method" value="EM"/>
    <property type="resolution" value="4.50 A"/>
    <property type="chains" value="E/e=1-800"/>
</dbReference>
<dbReference type="PDB" id="7EG7">
    <property type="method" value="EM"/>
    <property type="resolution" value="6.20 A"/>
    <property type="chains" value="E/e=1-800"/>
</dbReference>
<dbReference type="PDB" id="7EG8">
    <property type="method" value="EM"/>
    <property type="resolution" value="7.40 A"/>
    <property type="chains" value="E/e=1-800"/>
</dbReference>
<dbReference type="PDB" id="7EG9">
    <property type="method" value="EM"/>
    <property type="resolution" value="3.70 A"/>
    <property type="chains" value="E/e=1-800"/>
</dbReference>
<dbReference type="PDB" id="7EGA">
    <property type="method" value="EM"/>
    <property type="resolution" value="4.10 A"/>
    <property type="chains" value="E/e=1-800"/>
</dbReference>
<dbReference type="PDB" id="7EGB">
    <property type="method" value="EM"/>
    <property type="resolution" value="3.30 A"/>
    <property type="chains" value="E/e=1-800"/>
</dbReference>
<dbReference type="PDB" id="7EGC">
    <property type="method" value="EM"/>
    <property type="resolution" value="3.90 A"/>
    <property type="chains" value="E/e=1-800"/>
</dbReference>
<dbReference type="PDB" id="7EGD">
    <property type="method" value="EM"/>
    <property type="resolution" value="6.75 A"/>
    <property type="chains" value="E/e=1-800"/>
</dbReference>
<dbReference type="PDB" id="7EGE">
    <property type="method" value="EM"/>
    <property type="resolution" value="9.00 A"/>
    <property type="chains" value="E/e=1-800"/>
</dbReference>
<dbReference type="PDB" id="7EGF">
    <property type="method" value="EM"/>
    <property type="resolution" value="3.16 A"/>
    <property type="chains" value="e=1-800"/>
</dbReference>
<dbReference type="PDB" id="7EGG">
    <property type="method" value="EM"/>
    <property type="resolution" value="2.77 A"/>
    <property type="chains" value="E=1-800"/>
</dbReference>
<dbReference type="PDB" id="7EGI">
    <property type="method" value="EM"/>
    <property type="resolution" value="9.82 A"/>
    <property type="chains" value="E/e=1-800"/>
</dbReference>
<dbReference type="PDB" id="7EGJ">
    <property type="method" value="EM"/>
    <property type="resolution" value="8.64 A"/>
    <property type="chains" value="E/e=1-800"/>
</dbReference>
<dbReference type="PDB" id="7ENA">
    <property type="method" value="EM"/>
    <property type="resolution" value="4.07 A"/>
    <property type="chains" value="DE/De=1-800"/>
</dbReference>
<dbReference type="PDB" id="7ENC">
    <property type="method" value="EM"/>
    <property type="resolution" value="4.13 A"/>
    <property type="chains" value="DE/De=1-800"/>
</dbReference>
<dbReference type="PDB" id="8GXQ">
    <property type="method" value="EM"/>
    <property type="resolution" value="5.04 A"/>
    <property type="chains" value="DE/De=1-800"/>
</dbReference>
<dbReference type="PDB" id="8GXS">
    <property type="method" value="EM"/>
    <property type="resolution" value="4.16 A"/>
    <property type="chains" value="DE/De=1-800"/>
</dbReference>
<dbReference type="PDB" id="8WAK">
    <property type="method" value="EM"/>
    <property type="resolution" value="5.47 A"/>
    <property type="chains" value="E/e=1-800"/>
</dbReference>
<dbReference type="PDB" id="8WAL">
    <property type="method" value="EM"/>
    <property type="resolution" value="8.52 A"/>
    <property type="chains" value="E/e=1-800"/>
</dbReference>
<dbReference type="PDB" id="8WAN">
    <property type="method" value="EM"/>
    <property type="resolution" value="6.07 A"/>
    <property type="chains" value="E/e=1-800"/>
</dbReference>
<dbReference type="PDB" id="8WAO">
    <property type="method" value="EM"/>
    <property type="resolution" value="6.40 A"/>
    <property type="chains" value="E/e=1-800"/>
</dbReference>
<dbReference type="PDB" id="8WAP">
    <property type="method" value="EM"/>
    <property type="resolution" value="5.85 A"/>
    <property type="chains" value="E/e=1-800"/>
</dbReference>
<dbReference type="PDB" id="8WAQ">
    <property type="method" value="EM"/>
    <property type="resolution" value="6.29 A"/>
    <property type="chains" value="E/e=1-800"/>
</dbReference>
<dbReference type="PDB" id="8WAR">
    <property type="method" value="EM"/>
    <property type="resolution" value="7.20 A"/>
    <property type="chains" value="E/e=1-800"/>
</dbReference>
<dbReference type="PDB" id="8WAS">
    <property type="method" value="EM"/>
    <property type="resolution" value="6.13 A"/>
    <property type="chains" value="E/e=1-800"/>
</dbReference>
<dbReference type="PDBsum" id="2NXP"/>
<dbReference type="PDBsum" id="6F3T"/>
<dbReference type="PDBsum" id="6MZC"/>
<dbReference type="PDBsum" id="6MZD"/>
<dbReference type="PDBsum" id="6MZL"/>
<dbReference type="PDBsum" id="6MZM"/>
<dbReference type="PDBsum" id="7EDX"/>
<dbReference type="PDBsum" id="7EG7"/>
<dbReference type="PDBsum" id="7EG8"/>
<dbReference type="PDBsum" id="7EG9"/>
<dbReference type="PDBsum" id="7EGA"/>
<dbReference type="PDBsum" id="7EGB"/>
<dbReference type="PDBsum" id="7EGC"/>
<dbReference type="PDBsum" id="7EGD"/>
<dbReference type="PDBsum" id="7EGE"/>
<dbReference type="PDBsum" id="7EGF"/>
<dbReference type="PDBsum" id="7EGG"/>
<dbReference type="PDBsum" id="7EGI"/>
<dbReference type="PDBsum" id="7EGJ"/>
<dbReference type="PDBsum" id="7ENA"/>
<dbReference type="PDBsum" id="7ENC"/>
<dbReference type="PDBsum" id="8GXQ"/>
<dbReference type="PDBsum" id="8GXS"/>
<dbReference type="PDBsum" id="8WAK"/>
<dbReference type="PDBsum" id="8WAL"/>
<dbReference type="PDBsum" id="8WAN"/>
<dbReference type="PDBsum" id="8WAO"/>
<dbReference type="PDBsum" id="8WAP"/>
<dbReference type="PDBsum" id="8WAQ"/>
<dbReference type="PDBsum" id="8WAR"/>
<dbReference type="PDBsum" id="8WAS"/>
<dbReference type="EMDB" id="EMD-31075"/>
<dbReference type="EMDB" id="EMD-31107"/>
<dbReference type="EMDB" id="EMD-31108"/>
<dbReference type="EMDB" id="EMD-31109"/>
<dbReference type="EMDB" id="EMD-31110"/>
<dbReference type="EMDB" id="EMD-31111"/>
<dbReference type="EMDB" id="EMD-31112"/>
<dbReference type="EMDB" id="EMD-31113"/>
<dbReference type="EMDB" id="EMD-31114"/>
<dbReference type="EMDB" id="EMD-31115"/>
<dbReference type="EMDB" id="EMD-31116"/>
<dbReference type="EMDB" id="EMD-31118"/>
<dbReference type="EMDB" id="EMD-31119"/>
<dbReference type="EMDB" id="EMD-31204"/>
<dbReference type="EMDB" id="EMD-31207"/>
<dbReference type="EMDB" id="EMD-34359"/>
<dbReference type="EMDB" id="EMD-34360"/>
<dbReference type="EMDB" id="EMD-37395"/>
<dbReference type="EMDB" id="EMD-37396"/>
<dbReference type="EMDB" id="EMD-37398"/>
<dbReference type="EMDB" id="EMD-37399"/>
<dbReference type="EMDB" id="EMD-37400"/>
<dbReference type="EMDB" id="EMD-37401"/>
<dbReference type="EMDB" id="EMD-37402"/>
<dbReference type="EMDB" id="EMD-37403"/>
<dbReference type="EMDB" id="EMD-9298"/>
<dbReference type="EMDB" id="EMD-9302"/>
<dbReference type="EMDB" id="EMD-9305"/>
<dbReference type="EMDB" id="EMD-9306"/>
<dbReference type="SMR" id="Q15542"/>
<dbReference type="BioGRID" id="112740">
    <property type="interactions" value="89"/>
</dbReference>
<dbReference type="ComplexPortal" id="CPX-903">
    <property type="entry name" value="TFTC histone acetylation complex"/>
</dbReference>
<dbReference type="ComplexPortal" id="CPX-915">
    <property type="entry name" value="General transcription factor complex TFIID"/>
</dbReference>
<dbReference type="ComplexPortal" id="CPX-930">
    <property type="entry name" value="General transcription factor complex TFIID, TAF4B variant"/>
</dbReference>
<dbReference type="CORUM" id="Q15542"/>
<dbReference type="DIP" id="DIP-28150N"/>
<dbReference type="FunCoup" id="Q15542">
    <property type="interactions" value="2153"/>
</dbReference>
<dbReference type="IntAct" id="Q15542">
    <property type="interactions" value="63"/>
</dbReference>
<dbReference type="MINT" id="Q15542"/>
<dbReference type="STRING" id="9606.ENSP00000358854"/>
<dbReference type="GlyCosmos" id="Q15542">
    <property type="glycosylation" value="1 site, 2 glycans"/>
</dbReference>
<dbReference type="GlyGen" id="Q15542">
    <property type="glycosylation" value="1 site, 2 O-linked glycans (1 site)"/>
</dbReference>
<dbReference type="iPTMnet" id="Q15542"/>
<dbReference type="PhosphoSitePlus" id="Q15542"/>
<dbReference type="BioMuta" id="TAF5"/>
<dbReference type="DMDM" id="78103206"/>
<dbReference type="jPOST" id="Q15542"/>
<dbReference type="MassIVE" id="Q15542"/>
<dbReference type="PaxDb" id="9606-ENSP00000358854"/>
<dbReference type="PeptideAtlas" id="Q15542"/>
<dbReference type="ProteomicsDB" id="60623">
    <molecule id="Q15542-1"/>
</dbReference>
<dbReference type="ProteomicsDB" id="60624">
    <molecule id="Q15542-2"/>
</dbReference>
<dbReference type="Pumba" id="Q15542"/>
<dbReference type="TopDownProteomics" id="Q15542-2">
    <molecule id="Q15542-2"/>
</dbReference>
<dbReference type="Antibodypedia" id="1798">
    <property type="antibodies" value="146 antibodies from 23 providers"/>
</dbReference>
<dbReference type="DNASU" id="6877"/>
<dbReference type="Ensembl" id="ENST00000369839.4">
    <molecule id="Q15542-1"/>
    <property type="protein sequence ID" value="ENSP00000358854.3"/>
    <property type="gene ID" value="ENSG00000148835.12"/>
</dbReference>
<dbReference type="Ensembl" id="ENST00000692195.1">
    <molecule id="Q15542-2"/>
    <property type="protein sequence ID" value="ENSP00000510076.1"/>
    <property type="gene ID" value="ENSG00000148835.12"/>
</dbReference>
<dbReference type="GeneID" id="6877"/>
<dbReference type="KEGG" id="hsa:6877"/>
<dbReference type="MANE-Select" id="ENST00000369839.4">
    <property type="protein sequence ID" value="ENSP00000358854.3"/>
    <property type="RefSeq nucleotide sequence ID" value="NM_006951.5"/>
    <property type="RefSeq protein sequence ID" value="NP_008882.2"/>
</dbReference>
<dbReference type="UCSC" id="uc001kwv.5">
    <molecule id="Q15542-1"/>
    <property type="organism name" value="human"/>
</dbReference>
<dbReference type="AGR" id="HGNC:11539"/>
<dbReference type="CTD" id="6877"/>
<dbReference type="DisGeNET" id="6877"/>
<dbReference type="GeneCards" id="TAF5"/>
<dbReference type="HGNC" id="HGNC:11539">
    <property type="gene designation" value="TAF5"/>
</dbReference>
<dbReference type="HPA" id="ENSG00000148835">
    <property type="expression patterns" value="Tissue enhanced (testis)"/>
</dbReference>
<dbReference type="MIM" id="601787">
    <property type="type" value="gene"/>
</dbReference>
<dbReference type="neXtProt" id="NX_Q15542"/>
<dbReference type="OpenTargets" id="ENSG00000148835"/>
<dbReference type="PharmGKB" id="PA36314"/>
<dbReference type="VEuPathDB" id="HostDB:ENSG00000148835"/>
<dbReference type="eggNOG" id="KOG0263">
    <property type="taxonomic scope" value="Eukaryota"/>
</dbReference>
<dbReference type="GeneTree" id="ENSGT00940000153342"/>
<dbReference type="HOGENOM" id="CLU_005884_2_0_1"/>
<dbReference type="InParanoid" id="Q15542"/>
<dbReference type="OMA" id="HNHPVWD"/>
<dbReference type="OrthoDB" id="10266330at2759"/>
<dbReference type="PAN-GO" id="Q15542">
    <property type="GO annotations" value="3 GO annotations based on evolutionary models"/>
</dbReference>
<dbReference type="PhylomeDB" id="Q15542"/>
<dbReference type="TreeFam" id="TF300669"/>
<dbReference type="PathwayCommons" id="Q15542"/>
<dbReference type="Reactome" id="R-HSA-167161">
    <property type="pathway name" value="HIV Transcription Initiation"/>
</dbReference>
<dbReference type="Reactome" id="R-HSA-167162">
    <property type="pathway name" value="RNA Polymerase II HIV Promoter Escape"/>
</dbReference>
<dbReference type="Reactome" id="R-HSA-167172">
    <property type="pathway name" value="Transcription of the HIV genome"/>
</dbReference>
<dbReference type="Reactome" id="R-HSA-674695">
    <property type="pathway name" value="RNA Polymerase II Pre-transcription Events"/>
</dbReference>
<dbReference type="Reactome" id="R-HSA-6804756">
    <property type="pathway name" value="Regulation of TP53 Activity through Phosphorylation"/>
</dbReference>
<dbReference type="Reactome" id="R-HSA-6807505">
    <property type="pathway name" value="RNA polymerase II transcribes snRNA genes"/>
</dbReference>
<dbReference type="Reactome" id="R-HSA-73776">
    <property type="pathway name" value="RNA Polymerase II Promoter Escape"/>
</dbReference>
<dbReference type="Reactome" id="R-HSA-73779">
    <property type="pathway name" value="RNA Polymerase II Transcription Pre-Initiation And Promoter Opening"/>
</dbReference>
<dbReference type="Reactome" id="R-HSA-75953">
    <property type="pathway name" value="RNA Polymerase II Transcription Initiation"/>
</dbReference>
<dbReference type="Reactome" id="R-HSA-76042">
    <property type="pathway name" value="RNA Polymerase II Transcription Initiation And Promoter Clearance"/>
</dbReference>
<dbReference type="SignaLink" id="Q15542"/>
<dbReference type="SIGNOR" id="Q15542"/>
<dbReference type="BioGRID-ORCS" id="6877">
    <property type="hits" value="550 hits in 1174 CRISPR screens"/>
</dbReference>
<dbReference type="ChiTaRS" id="TAF5">
    <property type="organism name" value="human"/>
</dbReference>
<dbReference type="EvolutionaryTrace" id="Q15542"/>
<dbReference type="GeneWiki" id="TAF5"/>
<dbReference type="GenomeRNAi" id="6877"/>
<dbReference type="Pharos" id="Q15542">
    <property type="development level" value="Tbio"/>
</dbReference>
<dbReference type="PRO" id="PR:Q15542"/>
<dbReference type="Proteomes" id="UP000005640">
    <property type="component" value="Chromosome 10"/>
</dbReference>
<dbReference type="RNAct" id="Q15542">
    <property type="molecule type" value="protein"/>
</dbReference>
<dbReference type="Bgee" id="ENSG00000148835">
    <property type="expression patterns" value="Expressed in secondary oocyte and 171 other cell types or tissues"/>
</dbReference>
<dbReference type="GO" id="GO:0015629">
    <property type="term" value="C:actin cytoskeleton"/>
    <property type="evidence" value="ECO:0000314"/>
    <property type="project" value="HPA"/>
</dbReference>
<dbReference type="GO" id="GO:0000785">
    <property type="term" value="C:chromatin"/>
    <property type="evidence" value="ECO:0000314"/>
    <property type="project" value="ARUK-UCL"/>
</dbReference>
<dbReference type="GO" id="GO:0005654">
    <property type="term" value="C:nucleoplasm"/>
    <property type="evidence" value="ECO:0000314"/>
    <property type="project" value="HPA"/>
</dbReference>
<dbReference type="GO" id="GO:0005634">
    <property type="term" value="C:nucleus"/>
    <property type="evidence" value="ECO:0000314"/>
    <property type="project" value="UniProtKB"/>
</dbReference>
<dbReference type="GO" id="GO:0000124">
    <property type="term" value="C:SAGA complex"/>
    <property type="evidence" value="ECO:0000318"/>
    <property type="project" value="GO_Central"/>
</dbReference>
<dbReference type="GO" id="GO:0005669">
    <property type="term" value="C:transcription factor TFIID complex"/>
    <property type="evidence" value="ECO:0000314"/>
    <property type="project" value="UniProtKB"/>
</dbReference>
<dbReference type="GO" id="GO:0033276">
    <property type="term" value="C:transcription factor TFTC complex"/>
    <property type="evidence" value="ECO:0000314"/>
    <property type="project" value="UniProtKB"/>
</dbReference>
<dbReference type="GO" id="GO:0042802">
    <property type="term" value="F:identical protein binding"/>
    <property type="evidence" value="ECO:0000353"/>
    <property type="project" value="IntAct"/>
</dbReference>
<dbReference type="GO" id="GO:0016251">
    <property type="term" value="F:RNA polymerase II general transcription initiation factor activity"/>
    <property type="evidence" value="ECO:0000315"/>
    <property type="project" value="UniProtKB"/>
</dbReference>
<dbReference type="GO" id="GO:0006352">
    <property type="term" value="P:DNA-templated transcription initiation"/>
    <property type="evidence" value="ECO:0000314"/>
    <property type="project" value="UniProtKB"/>
</dbReference>
<dbReference type="GO" id="GO:0042789">
    <property type="term" value="P:mRNA transcription by RNA polymerase II"/>
    <property type="evidence" value="ECO:0000314"/>
    <property type="project" value="ComplexPortal"/>
</dbReference>
<dbReference type="GO" id="GO:0045893">
    <property type="term" value="P:positive regulation of DNA-templated transcription"/>
    <property type="evidence" value="ECO:0000303"/>
    <property type="project" value="ComplexPortal"/>
</dbReference>
<dbReference type="GO" id="GO:0060261">
    <property type="term" value="P:positive regulation of transcription initiation by RNA polymerase II"/>
    <property type="evidence" value="ECO:0000314"/>
    <property type="project" value="ComplexPortal"/>
</dbReference>
<dbReference type="GO" id="GO:0006282">
    <property type="term" value="P:regulation of DNA repair"/>
    <property type="evidence" value="ECO:0000303"/>
    <property type="project" value="ComplexPortal"/>
</dbReference>
<dbReference type="GO" id="GO:0006357">
    <property type="term" value="P:regulation of transcription by RNA polymerase II"/>
    <property type="evidence" value="ECO:0000314"/>
    <property type="project" value="ComplexPortal"/>
</dbReference>
<dbReference type="GO" id="GO:0051123">
    <property type="term" value="P:RNA polymerase II preinitiation complex assembly"/>
    <property type="evidence" value="ECO:0000353"/>
    <property type="project" value="ComplexPortal"/>
</dbReference>
<dbReference type="GO" id="GO:0006367">
    <property type="term" value="P:transcription initiation at RNA polymerase II promoter"/>
    <property type="evidence" value="ECO:0000314"/>
    <property type="project" value="UniProtKB"/>
</dbReference>
<dbReference type="CDD" id="cd08044">
    <property type="entry name" value="TAF5_NTD2"/>
    <property type="match status" value="1"/>
</dbReference>
<dbReference type="CDD" id="cd00200">
    <property type="entry name" value="WD40"/>
    <property type="match status" value="1"/>
</dbReference>
<dbReference type="FunFam" id="1.25.40.500:FF:000001">
    <property type="entry name" value="Transcription initiation factor TFIID subunit 5"/>
    <property type="match status" value="1"/>
</dbReference>
<dbReference type="FunFam" id="2.130.10.10:FF:000243">
    <property type="entry name" value="Transcription initiation factor TFIID subunit 5"/>
    <property type="match status" value="1"/>
</dbReference>
<dbReference type="Gene3D" id="1.25.40.500">
    <property type="entry name" value="TFIID subunit TAF5, NTD2 domain"/>
    <property type="match status" value="1"/>
</dbReference>
<dbReference type="Gene3D" id="2.130.10.10">
    <property type="entry name" value="YVTN repeat-like/Quinoprotein amine dehydrogenase"/>
    <property type="match status" value="2"/>
</dbReference>
<dbReference type="InterPro" id="IPR020472">
    <property type="entry name" value="G-protein_beta_WD-40_rep"/>
</dbReference>
<dbReference type="InterPro" id="IPR006594">
    <property type="entry name" value="LisH"/>
</dbReference>
<dbReference type="InterPro" id="IPR007582">
    <property type="entry name" value="TFIID_NTD2"/>
</dbReference>
<dbReference type="InterPro" id="IPR037264">
    <property type="entry name" value="TFIID_NTD2_sf"/>
</dbReference>
<dbReference type="InterPro" id="IPR015943">
    <property type="entry name" value="WD40/YVTN_repeat-like_dom_sf"/>
</dbReference>
<dbReference type="InterPro" id="IPR019775">
    <property type="entry name" value="WD40_repeat_CS"/>
</dbReference>
<dbReference type="InterPro" id="IPR036322">
    <property type="entry name" value="WD40_repeat_dom_sf"/>
</dbReference>
<dbReference type="InterPro" id="IPR001680">
    <property type="entry name" value="WD40_rpt"/>
</dbReference>
<dbReference type="PANTHER" id="PTHR19879">
    <property type="entry name" value="TRANSCRIPTION INITIATION FACTOR TFIID"/>
    <property type="match status" value="1"/>
</dbReference>
<dbReference type="PANTHER" id="PTHR19879:SF4">
    <property type="entry name" value="TRANSCRIPTION INITIATION FACTOR TFIID SUBUNIT 5"/>
    <property type="match status" value="1"/>
</dbReference>
<dbReference type="Pfam" id="PF04494">
    <property type="entry name" value="TFIID_NTD2"/>
    <property type="match status" value="1"/>
</dbReference>
<dbReference type="Pfam" id="PF00400">
    <property type="entry name" value="WD40"/>
    <property type="match status" value="6"/>
</dbReference>
<dbReference type="PRINTS" id="PR00320">
    <property type="entry name" value="GPROTEINBRPT"/>
</dbReference>
<dbReference type="SMART" id="SM00320">
    <property type="entry name" value="WD40"/>
    <property type="match status" value="6"/>
</dbReference>
<dbReference type="SUPFAM" id="SSF160897">
    <property type="entry name" value="Taf5 N-terminal domain-like"/>
    <property type="match status" value="1"/>
</dbReference>
<dbReference type="SUPFAM" id="SSF50978">
    <property type="entry name" value="WD40 repeat-like"/>
    <property type="match status" value="1"/>
</dbReference>
<dbReference type="PROSITE" id="PS50896">
    <property type="entry name" value="LISH"/>
    <property type="match status" value="1"/>
</dbReference>
<dbReference type="PROSITE" id="PS00678">
    <property type="entry name" value="WD_REPEATS_1"/>
    <property type="match status" value="3"/>
</dbReference>
<dbReference type="PROSITE" id="PS50082">
    <property type="entry name" value="WD_REPEATS_2"/>
    <property type="match status" value="6"/>
</dbReference>
<dbReference type="PROSITE" id="PS50294">
    <property type="entry name" value="WD_REPEATS_REGION"/>
    <property type="match status" value="2"/>
</dbReference>
<name>TAF5_HUMAN</name>
<comment type="function">
    <text evidence="8 10 11 12">The TFIID basal transcription factor complex plays a major role in the initiation of RNA polymerase II (Pol II)-dependent transcription (PubMed:33795473). TFIID recognizes and binds promoters with or without a TATA box via its subunit TBP, a TATA-box-binding protein, and promotes assembly of the pre-initiation complex (PIC) (PubMed:33795473). The TFIID complex consists of TBP and TBP-associated factors (TAFs), including TAF1, TAF2, TAF3, TAF4, TAF5, TAF6, TAF7, TAF8, TAF9, TAF10, TAF11, TAF12 and TAF13 (PubMed:33795473, PubMed:8758937, PubMed:8942982, PubMed:9045704). The TFIID complex structure can be divided into 3 modules TFIID-A, TFIID-B, and TFIID-C (PubMed:33795473). TAF5 is involved in two modules of TFIID, in TFIID-A together with TAF3 and TBP, and in TFIID-B with TAF8 (PubMed:33795473). Involved in contacts between TFIID and TFIIF in the PIC (PubMed:33795473).</text>
</comment>
<comment type="subunit">
    <text evidence="4 5 7 8 10 12">Homodimer (PubMed:17227857). Component of the TFIID basal transcription factor complex, composed of TATA-box-binding protein TBP, and a number of TBP-associated factors (TAFs), including TAF1, TAF2, TAF3, TAF4, TAF5, TAF6, TAF7, TAF8, TAF9, TAF10, TAF11, TAF12 and TAF13 (PubMed:10373431, PubMed:33795473). The TFIID complex structure can be divided into 3 modules TFIID-A, TFIID-B, and TFIID-C (PubMed:33795473). TAF5 forms the TFIID-A module together with TAF3 and TBP, and in TFIID-B with TAF8 (PubMed:33795473). Component of the TFTC-HAT complex, at least composed of TAF5L, TAF6L, TADA3L, SUPT3H/SPT3, TAF2, TAF4, TAF5, GCN5L2/GCN5, TAF10 and TRRAP (PubMed:10373431, PubMed:12601814, PubMed:17227857). TBP is not part of the TFTC-HAT complex (PubMed:10373431, PubMed:12601814). Interacts strongly with the histone H4-related TAF6 and the histone H3-related TAF9, as well as a stable complex comprised of both TAF6 and TAF9 (PubMed:9045704). Apparently weaker interactions with TBP, TAF1, TAF11, and TAF12, but not TAF7, also have been observed (PubMed:8758937, PubMed:9045704).</text>
</comment>
<comment type="subunit">
    <text evidence="9">(Microbial infection) Interacts with SV40 Large T antigen.</text>
</comment>
<comment type="interaction">
    <interactant intactId="EBI-1560145">
        <id>Q15542</id>
    </interactant>
    <interactant intactId="EBI-1560087">
        <id>Q5VWG9</id>
        <label>TAF3</label>
    </interactant>
    <organismsDiffer>false</organismsDiffer>
    <experiments>2</experiments>
</comment>
<comment type="interaction">
    <interactant intactId="EBI-1560145">
        <id>Q15542</id>
    </interactant>
    <interactant intactId="EBI-1560145">
        <id>Q15542</id>
        <label>TAF5</label>
    </interactant>
    <organismsDiffer>false</organismsDiffer>
    <experiments>4</experiments>
</comment>
<comment type="subcellular location">
    <subcellularLocation>
        <location>Nucleus</location>
    </subcellularLocation>
</comment>
<comment type="alternative products">
    <event type="alternative splicing"/>
    <isoform>
        <id>Q15542-1</id>
        <name>Long</name>
        <sequence type="displayed"/>
    </isoform>
    <isoform>
        <id>Q15542-2</id>
        <name>Short</name>
        <sequence type="described" ref="VSP_006787"/>
    </isoform>
</comment>
<comment type="domain">
    <text>Distinct domains of TAF5/TAFII100 are required for functional interaction with transcription factor TFIIFB (RAP30) and incorporation into the TFIID complex.</text>
</comment>
<comment type="similarity">
    <text evidence="16">Belongs to the WD repeat TAF5 family.</text>
</comment>
<comment type="sequence caution" evidence="16">
    <conflict type="erroneous initiation">
        <sequence resource="EMBL-CDS" id="AAC50902"/>
    </conflict>
</comment>
<comment type="sequence caution" evidence="16">
    <conflict type="erroneous initiation">
        <sequence resource="EMBL-CDS" id="BAD97335"/>
    </conflict>
</comment>
<gene>
    <name type="primary">TAF5</name>
    <name type="synonym">TAF2D</name>
</gene>
<sequence>MAALAEEQTEVAVKLEPEGPPTLLPPQAGDGAGEGSGGTTNNGPNGGGGNVAASSSTGGDGGTPKPTVAVSAAAPAGAAPVPAAAPDAGAPHDRQTLLAVLQFLRQSKLREAEEALRREAGLLEEAVAGSGAPGEVDSAGAEVTSALLSRVTASAPGPAAPDPPGTGASGATVVSGSASGPAAPGKVGSVAVEDQPDVSAVLSAYNQQGDPTMYEEYYSGLKHFIECSLDCHRAELSQLFYPLFVHMYLELVYNQHENEAKSFFEKFHGDQECYYQDDLRVLSSLTKKEHMKGNETMLDFRTSKFVLRISRDSYQLLKRHLQEKQNNQIWNIVQEHLYIDIFDGMPRSKQQIDAMVGSLAGEAKREANKSKVFFGLLKEPEIEVPLDDEDEEGENEEGKPKKKKPKKDSIGSKSKKQDPNAPPQNRIPLPELKDSDKLDKIMNMKETTKRVRLGPDCLPSICFYTFLNAYQGLTAVDVTDDSSLIAGGFADSTVRVWSVTPKKLRSVKQASDLSLIDKESDDVLERIMDEKTASELKILYGHSGPVYGASFSPDRNYLLSSSEDGTVRLWSLQTFTCLVGYKGHNYPVWDTQFSPYGYYFVSGGHDRVARLWATDHYQPLRIFAGHLADVNCTRFHPNSNYVATGSADRTVRLWDVLNGNCVRIFTGHKGPIHSLTFSPNGRFLATGATDGRVLLWDIGHGLMVGELKGHTDTVCSLRFSRDGEILASGSMDNTVRLWDAIKAFEDLETDDFTTATGHINLPENSQELLLGTYMTKSTPVVHLHFTRRNLVLAAGAYSPQ</sequence>
<keyword id="KW-0002">3D-structure</keyword>
<keyword id="KW-0025">Alternative splicing</keyword>
<keyword id="KW-0903">Direct protein sequencing</keyword>
<keyword id="KW-0945">Host-virus interaction</keyword>
<keyword id="KW-0539">Nucleus</keyword>
<keyword id="KW-1267">Proteomics identification</keyword>
<keyword id="KW-1185">Reference proteome</keyword>
<keyword id="KW-0677">Repeat</keyword>
<keyword id="KW-0804">Transcription</keyword>
<keyword id="KW-0805">Transcription regulation</keyword>
<keyword id="KW-0853">WD repeat</keyword>
<organism>
    <name type="scientific">Homo sapiens</name>
    <name type="common">Human</name>
    <dbReference type="NCBI Taxonomy" id="9606"/>
    <lineage>
        <taxon>Eukaryota</taxon>
        <taxon>Metazoa</taxon>
        <taxon>Chordata</taxon>
        <taxon>Craniata</taxon>
        <taxon>Vertebrata</taxon>
        <taxon>Euteleostomi</taxon>
        <taxon>Mammalia</taxon>
        <taxon>Eutheria</taxon>
        <taxon>Euarchontoglires</taxon>
        <taxon>Primates</taxon>
        <taxon>Haplorrhini</taxon>
        <taxon>Catarrhini</taxon>
        <taxon>Hominidae</taxon>
        <taxon>Homo</taxon>
    </lineage>
</organism>
<reference key="1">
    <citation type="journal article" date="1996" name="EMBO J.">
        <title>Distinct domains of hTAFII100 are required for functional interaction with transcription factor TFIIF beta (RAP30) and incorporation into the TFIID complex.</title>
        <authorList>
            <person name="Dubrovskaya V."/>
            <person name="Lavigne A.-C."/>
            <person name="Davidson I."/>
            <person name="Acker J."/>
            <person name="Staub A."/>
            <person name="Tora L."/>
        </authorList>
    </citation>
    <scope>NUCLEOTIDE SEQUENCE [MRNA] (ISOFORM LONG)</scope>
    <scope>FUNCTION</scope>
    <scope>VARIANT ALA-130</scope>
    <source>
        <tissue>Cervix carcinoma</tissue>
    </source>
</reference>
<reference key="2">
    <citation type="journal article" date="1996" name="Proc. Natl. Acad. Sci. U.S.A.">
        <title>Molecular cloning and analysis of two subunits of the human TFIID complex: hTAFII130 and hTAFII100.</title>
        <authorList>
            <person name="Tanese N."/>
            <person name="Saluja D."/>
            <person name="Vassallo M.F."/>
            <person name="Chen J.-L."/>
            <person name="Admon A."/>
        </authorList>
    </citation>
    <scope>NUCLEOTIDE SEQUENCE [MRNA] (ISOFORM LONG)</scope>
    <scope>PROTEIN SEQUENCE OF 109-117; 119-142; 151-174; 372-388; 611-621; 635-649 AND 737-742</scope>
    <scope>ALTERNATIVE SPLICING</scope>
    <source>
        <tissue>Cervix carcinoma</tissue>
    </source>
</reference>
<reference key="3">
    <citation type="journal article" date="1997" name="J. Biol. Chem.">
        <title>Specific interactions and potential functions of human TAFII100.</title>
        <authorList>
            <person name="Tao Y."/>
            <person name="Guermah M."/>
            <person name="Martinez E."/>
            <person name="Oegelschlaeger T."/>
            <person name="Hasegawa S."/>
            <person name="Takada R."/>
            <person name="Yamamoto T."/>
            <person name="Horikoshi M."/>
            <person name="Roeder R.G."/>
        </authorList>
    </citation>
    <scope>NUCLEOTIDE SEQUENCE [MRNA] (ISOFORM LONG)</scope>
    <scope>VARIANT ALA-130</scope>
    <source>
        <tissue>Cervix carcinoma</tissue>
    </source>
</reference>
<reference key="4">
    <citation type="journal article" date="2004" name="Nat. Genet.">
        <title>Complete sequencing and characterization of 21,243 full-length human cDNAs.</title>
        <authorList>
            <person name="Ota T."/>
            <person name="Suzuki Y."/>
            <person name="Nishikawa T."/>
            <person name="Otsuki T."/>
            <person name="Sugiyama T."/>
            <person name="Irie R."/>
            <person name="Wakamatsu A."/>
            <person name="Hayashi K."/>
            <person name="Sato H."/>
            <person name="Nagai K."/>
            <person name="Kimura K."/>
            <person name="Makita H."/>
            <person name="Sekine M."/>
            <person name="Obayashi M."/>
            <person name="Nishi T."/>
            <person name="Shibahara T."/>
            <person name="Tanaka T."/>
            <person name="Ishii S."/>
            <person name="Yamamoto J."/>
            <person name="Saito K."/>
            <person name="Kawai Y."/>
            <person name="Isono Y."/>
            <person name="Nakamura Y."/>
            <person name="Nagahari K."/>
            <person name="Murakami K."/>
            <person name="Yasuda T."/>
            <person name="Iwayanagi T."/>
            <person name="Wagatsuma M."/>
            <person name="Shiratori A."/>
            <person name="Sudo H."/>
            <person name="Hosoiri T."/>
            <person name="Kaku Y."/>
            <person name="Kodaira H."/>
            <person name="Kondo H."/>
            <person name="Sugawara M."/>
            <person name="Takahashi M."/>
            <person name="Kanda K."/>
            <person name="Yokoi T."/>
            <person name="Furuya T."/>
            <person name="Kikkawa E."/>
            <person name="Omura Y."/>
            <person name="Abe K."/>
            <person name="Kamihara K."/>
            <person name="Katsuta N."/>
            <person name="Sato K."/>
            <person name="Tanikawa M."/>
            <person name="Yamazaki M."/>
            <person name="Ninomiya K."/>
            <person name="Ishibashi T."/>
            <person name="Yamashita H."/>
            <person name="Murakawa K."/>
            <person name="Fujimori K."/>
            <person name="Tanai H."/>
            <person name="Kimata M."/>
            <person name="Watanabe M."/>
            <person name="Hiraoka S."/>
            <person name="Chiba Y."/>
            <person name="Ishida S."/>
            <person name="Ono Y."/>
            <person name="Takiguchi S."/>
            <person name="Watanabe S."/>
            <person name="Yosida M."/>
            <person name="Hotuta T."/>
            <person name="Kusano J."/>
            <person name="Kanehori K."/>
            <person name="Takahashi-Fujii A."/>
            <person name="Hara H."/>
            <person name="Tanase T.-O."/>
            <person name="Nomura Y."/>
            <person name="Togiya S."/>
            <person name="Komai F."/>
            <person name="Hara R."/>
            <person name="Takeuchi K."/>
            <person name="Arita M."/>
            <person name="Imose N."/>
            <person name="Musashino K."/>
            <person name="Yuuki H."/>
            <person name="Oshima A."/>
            <person name="Sasaki N."/>
            <person name="Aotsuka S."/>
            <person name="Yoshikawa Y."/>
            <person name="Matsunawa H."/>
            <person name="Ichihara T."/>
            <person name="Shiohata N."/>
            <person name="Sano S."/>
            <person name="Moriya S."/>
            <person name="Momiyama H."/>
            <person name="Satoh N."/>
            <person name="Takami S."/>
            <person name="Terashima Y."/>
            <person name="Suzuki O."/>
            <person name="Nakagawa S."/>
            <person name="Senoh A."/>
            <person name="Mizoguchi H."/>
            <person name="Goto Y."/>
            <person name="Shimizu F."/>
            <person name="Wakebe H."/>
            <person name="Hishigaki H."/>
            <person name="Watanabe T."/>
            <person name="Sugiyama A."/>
            <person name="Takemoto M."/>
            <person name="Kawakami B."/>
            <person name="Yamazaki M."/>
            <person name="Watanabe K."/>
            <person name="Kumagai A."/>
            <person name="Itakura S."/>
            <person name="Fukuzumi Y."/>
            <person name="Fujimori Y."/>
            <person name="Komiyama M."/>
            <person name="Tashiro H."/>
            <person name="Tanigami A."/>
            <person name="Fujiwara T."/>
            <person name="Ono T."/>
            <person name="Yamada K."/>
            <person name="Fujii Y."/>
            <person name="Ozaki K."/>
            <person name="Hirao M."/>
            <person name="Ohmori Y."/>
            <person name="Kawabata A."/>
            <person name="Hikiji T."/>
            <person name="Kobatake N."/>
            <person name="Inagaki H."/>
            <person name="Ikema Y."/>
            <person name="Okamoto S."/>
            <person name="Okitani R."/>
            <person name="Kawakami T."/>
            <person name="Noguchi S."/>
            <person name="Itoh T."/>
            <person name="Shigeta K."/>
            <person name="Senba T."/>
            <person name="Matsumura K."/>
            <person name="Nakajima Y."/>
            <person name="Mizuno T."/>
            <person name="Morinaga M."/>
            <person name="Sasaki M."/>
            <person name="Togashi T."/>
            <person name="Oyama M."/>
            <person name="Hata H."/>
            <person name="Watanabe M."/>
            <person name="Komatsu T."/>
            <person name="Mizushima-Sugano J."/>
            <person name="Satoh T."/>
            <person name="Shirai Y."/>
            <person name="Takahashi Y."/>
            <person name="Nakagawa K."/>
            <person name="Okumura K."/>
            <person name="Nagase T."/>
            <person name="Nomura N."/>
            <person name="Kikuchi H."/>
            <person name="Masuho Y."/>
            <person name="Yamashita R."/>
            <person name="Nakai K."/>
            <person name="Yada T."/>
            <person name="Nakamura Y."/>
            <person name="Ohara O."/>
            <person name="Isogai T."/>
            <person name="Sugano S."/>
        </authorList>
    </citation>
    <scope>NUCLEOTIDE SEQUENCE [LARGE SCALE MRNA] (ISOFORM LONG)</scope>
</reference>
<reference key="5">
    <citation type="submission" date="2005-04" db="EMBL/GenBank/DDBJ databases">
        <authorList>
            <person name="Totoki Y."/>
            <person name="Toyoda A."/>
            <person name="Takeda T."/>
            <person name="Sakaki Y."/>
            <person name="Tanaka A."/>
            <person name="Yokoyama S."/>
        </authorList>
    </citation>
    <scope>NUCLEOTIDE SEQUENCE [LARGE SCALE MRNA] (ISOFORM LONG)</scope>
    <scope>VARIANT ALA-130</scope>
    <source>
        <tissue>Brain</tissue>
    </source>
</reference>
<reference key="6">
    <citation type="journal article" date="2004" name="Nature">
        <title>The DNA sequence and comparative analysis of human chromosome 10.</title>
        <authorList>
            <person name="Deloukas P."/>
            <person name="Earthrowl M.E."/>
            <person name="Grafham D.V."/>
            <person name="Rubenfield M."/>
            <person name="French L."/>
            <person name="Steward C.A."/>
            <person name="Sims S.K."/>
            <person name="Jones M.C."/>
            <person name="Searle S."/>
            <person name="Scott C."/>
            <person name="Howe K."/>
            <person name="Hunt S.E."/>
            <person name="Andrews T.D."/>
            <person name="Gilbert J.G.R."/>
            <person name="Swarbreck D."/>
            <person name="Ashurst J.L."/>
            <person name="Taylor A."/>
            <person name="Battles J."/>
            <person name="Bird C.P."/>
            <person name="Ainscough R."/>
            <person name="Almeida J.P."/>
            <person name="Ashwell R.I.S."/>
            <person name="Ambrose K.D."/>
            <person name="Babbage A.K."/>
            <person name="Bagguley C.L."/>
            <person name="Bailey J."/>
            <person name="Banerjee R."/>
            <person name="Bates K."/>
            <person name="Beasley H."/>
            <person name="Bray-Allen S."/>
            <person name="Brown A.J."/>
            <person name="Brown J.Y."/>
            <person name="Burford D.C."/>
            <person name="Burrill W."/>
            <person name="Burton J."/>
            <person name="Cahill P."/>
            <person name="Camire D."/>
            <person name="Carter N.P."/>
            <person name="Chapman J.C."/>
            <person name="Clark S.Y."/>
            <person name="Clarke G."/>
            <person name="Clee C.M."/>
            <person name="Clegg S."/>
            <person name="Corby N."/>
            <person name="Coulson A."/>
            <person name="Dhami P."/>
            <person name="Dutta I."/>
            <person name="Dunn M."/>
            <person name="Faulkner L."/>
            <person name="Frankish A."/>
            <person name="Frankland J.A."/>
            <person name="Garner P."/>
            <person name="Garnett J."/>
            <person name="Gribble S."/>
            <person name="Griffiths C."/>
            <person name="Grocock R."/>
            <person name="Gustafson E."/>
            <person name="Hammond S."/>
            <person name="Harley J.L."/>
            <person name="Hart E."/>
            <person name="Heath P.D."/>
            <person name="Ho T.P."/>
            <person name="Hopkins B."/>
            <person name="Horne J."/>
            <person name="Howden P.J."/>
            <person name="Huckle E."/>
            <person name="Hynds C."/>
            <person name="Johnson C."/>
            <person name="Johnson D."/>
            <person name="Kana A."/>
            <person name="Kay M."/>
            <person name="Kimberley A.M."/>
            <person name="Kershaw J.K."/>
            <person name="Kokkinaki M."/>
            <person name="Laird G.K."/>
            <person name="Lawlor S."/>
            <person name="Lee H.M."/>
            <person name="Leongamornlert D.A."/>
            <person name="Laird G."/>
            <person name="Lloyd C."/>
            <person name="Lloyd D.M."/>
            <person name="Loveland J."/>
            <person name="Lovell J."/>
            <person name="McLaren S."/>
            <person name="McLay K.E."/>
            <person name="McMurray A."/>
            <person name="Mashreghi-Mohammadi M."/>
            <person name="Matthews L."/>
            <person name="Milne S."/>
            <person name="Nickerson T."/>
            <person name="Nguyen M."/>
            <person name="Overton-Larty E."/>
            <person name="Palmer S.A."/>
            <person name="Pearce A.V."/>
            <person name="Peck A.I."/>
            <person name="Pelan S."/>
            <person name="Phillimore B."/>
            <person name="Porter K."/>
            <person name="Rice C.M."/>
            <person name="Rogosin A."/>
            <person name="Ross M.T."/>
            <person name="Sarafidou T."/>
            <person name="Sehra H.K."/>
            <person name="Shownkeen R."/>
            <person name="Skuce C.D."/>
            <person name="Smith M."/>
            <person name="Standring L."/>
            <person name="Sycamore N."/>
            <person name="Tester J."/>
            <person name="Thorpe A."/>
            <person name="Torcasso W."/>
            <person name="Tracey A."/>
            <person name="Tromans A."/>
            <person name="Tsolas J."/>
            <person name="Wall M."/>
            <person name="Walsh J."/>
            <person name="Wang H."/>
            <person name="Weinstock K."/>
            <person name="West A.P."/>
            <person name="Willey D.L."/>
            <person name="Whitehead S.L."/>
            <person name="Wilming L."/>
            <person name="Wray P.W."/>
            <person name="Young L."/>
            <person name="Chen Y."/>
            <person name="Lovering R.C."/>
            <person name="Moschonas N.K."/>
            <person name="Siebert R."/>
            <person name="Fechtel K."/>
            <person name="Bentley D."/>
            <person name="Durbin R.M."/>
            <person name="Hubbard T."/>
            <person name="Doucette-Stamm L."/>
            <person name="Beck S."/>
            <person name="Smith D.R."/>
            <person name="Rogers J."/>
        </authorList>
    </citation>
    <scope>NUCLEOTIDE SEQUENCE [LARGE SCALE GENOMIC DNA]</scope>
</reference>
<reference key="7">
    <citation type="submission" date="2005-09" db="EMBL/GenBank/DDBJ databases">
        <authorList>
            <person name="Mural R.J."/>
            <person name="Istrail S."/>
            <person name="Sutton G.G."/>
            <person name="Florea L."/>
            <person name="Halpern A.L."/>
            <person name="Mobarry C.M."/>
            <person name="Lippert R."/>
            <person name="Walenz B."/>
            <person name="Shatkay H."/>
            <person name="Dew I."/>
            <person name="Miller J.R."/>
            <person name="Flanigan M.J."/>
            <person name="Edwards N.J."/>
            <person name="Bolanos R."/>
            <person name="Fasulo D."/>
            <person name="Halldorsson B.V."/>
            <person name="Hannenhalli S."/>
            <person name="Turner R."/>
            <person name="Yooseph S."/>
            <person name="Lu F."/>
            <person name="Nusskern D.R."/>
            <person name="Shue B.C."/>
            <person name="Zheng X.H."/>
            <person name="Zhong F."/>
            <person name="Delcher A.L."/>
            <person name="Huson D.H."/>
            <person name="Kravitz S.A."/>
            <person name="Mouchard L."/>
            <person name="Reinert K."/>
            <person name="Remington K.A."/>
            <person name="Clark A.G."/>
            <person name="Waterman M.S."/>
            <person name="Eichler E.E."/>
            <person name="Adams M.D."/>
            <person name="Hunkapiller M.W."/>
            <person name="Myers E.W."/>
            <person name="Venter J.C."/>
        </authorList>
    </citation>
    <scope>NUCLEOTIDE SEQUENCE [LARGE SCALE GENOMIC DNA]</scope>
</reference>
<reference key="8">
    <citation type="journal article" date="2004" name="Genome Res.">
        <title>The status, quality, and expansion of the NIH full-length cDNA project: the Mammalian Gene Collection (MGC).</title>
        <authorList>
            <consortium name="The MGC Project Team"/>
        </authorList>
    </citation>
    <scope>NUCLEOTIDE SEQUENCE [LARGE SCALE MRNA] (ISOFORMS LONG AND SHORT)</scope>
    <scope>VARIANT ALA-130</scope>
    <source>
        <tissue>Prostate</tissue>
        <tissue>Testis</tissue>
    </source>
</reference>
<reference key="9">
    <citation type="journal article" date="1996" name="Genes Dev.">
        <title>TAF-like function of SV40 large T antigen.</title>
        <authorList>
            <person name="Damania B."/>
            <person name="Alwine J.C."/>
        </authorList>
    </citation>
    <scope>INTERACTION WITH SV40 LARGE T ANTIGEN (MICROBIAL INFECTION)</scope>
</reference>
<reference key="10">
    <citation type="journal article" date="1999" name="J. Biol. Chem.">
        <title>Identification of TATA-binding protein-free TAFII-containing complex subunits suggests a role in nucleosome acetylation and signal transduction.</title>
        <authorList>
            <person name="Brand M."/>
            <person name="Yamamoto K."/>
            <person name="Staub A."/>
            <person name="Tora L."/>
        </authorList>
    </citation>
    <scope>IDENTIFICATION IN THE TFTC-HAT COMPLEX WITH TAF5L; TAF6L; TADA3L; SUPT3H; TAF2; TAF4; TRRAP; GCN5L2 AND TAF10</scope>
</reference>
<reference key="11">
    <citation type="journal article" date="2003" name="Proteomics">
        <title>Novel subunits of the TATA binding protein free TAFII-containing transcription complex identified by matrix-assisted laser desorption/ionization-time of flight mass spectrometry following one-dimensional gel electrophoresis.</title>
        <authorList>
            <person name="Cavusoglu N."/>
            <person name="Brand M."/>
            <person name="Tora L."/>
            <person name="van Dorsselaer A."/>
        </authorList>
    </citation>
    <scope>IDENTIFICATION IN THE TFTC-HAT COMPLEX</scope>
    <scope>IDENTIFICATION BY MASS SPECTROMETRY</scope>
</reference>
<reference key="12">
    <citation type="journal article" date="2011" name="BMC Syst. Biol.">
        <title>Initial characterization of the human central proteome.</title>
        <authorList>
            <person name="Burkard T.R."/>
            <person name="Planyavsky M."/>
            <person name="Kaupe I."/>
            <person name="Breitwieser F.P."/>
            <person name="Buerckstuemmer T."/>
            <person name="Bennett K.L."/>
            <person name="Superti-Furga G."/>
            <person name="Colinge J."/>
        </authorList>
    </citation>
    <scope>IDENTIFICATION BY MASS SPECTROMETRY [LARGE SCALE ANALYSIS]</scope>
</reference>
<reference key="13">
    <citation type="journal article" date="2007" name="Proc. Natl. Acad. Sci. U.S.A.">
        <title>Structural analysis and dimerization potential of the human TAF5 subunit of TFIID.</title>
        <authorList>
            <person name="Bhattacharya S."/>
            <person name="Takada S."/>
            <person name="Jacobson R.H."/>
        </authorList>
    </citation>
    <scope>X-RAY CRYSTALLOGRAPHY (2.17 ANGSTROMS) OF 188-343</scope>
    <scope>SUBUNIT</scope>
</reference>
<reference evidence="18 19 20 21 22 23 24 25 26" key="14">
    <citation type="journal article" date="2021" name="Science">
        <title>Structural insights into preinitiation complex assembly on core promoters.</title>
        <authorList>
            <person name="Chen X."/>
            <person name="Qi Y."/>
            <person name="Wu Z."/>
            <person name="Wang X."/>
            <person name="Li J."/>
            <person name="Zhao D."/>
            <person name="Hou H."/>
            <person name="Li Y."/>
            <person name="Yu Z."/>
            <person name="Liu W."/>
            <person name="Wang M."/>
            <person name="Ren Y."/>
            <person name="Li Z."/>
            <person name="Yang H."/>
            <person name="Xu Y."/>
        </authorList>
    </citation>
    <scope>STRUCTURE BY ELECTRON MICROSCOPY (2.77 ANGSTROMS)</scope>
    <scope>FUNCTION</scope>
    <scope>IDENTIFICATION IN THE TFIID COMPLEX</scope>
    <scope>SUBUNIT</scope>
</reference>
<evidence type="ECO:0000255" key="1"/>
<evidence type="ECO:0000255" key="2">
    <source>
        <dbReference type="PROSITE-ProRule" id="PRU00126"/>
    </source>
</evidence>
<evidence type="ECO:0000256" key="3">
    <source>
        <dbReference type="SAM" id="MobiDB-lite"/>
    </source>
</evidence>
<evidence type="ECO:0000269" key="4">
    <source>
    </source>
</evidence>
<evidence type="ECO:0000269" key="5">
    <source>
    </source>
</evidence>
<evidence type="ECO:0000269" key="6">
    <source>
    </source>
</evidence>
<evidence type="ECO:0000269" key="7">
    <source>
    </source>
</evidence>
<evidence type="ECO:0000269" key="8">
    <source>
    </source>
</evidence>
<evidence type="ECO:0000269" key="9">
    <source>
    </source>
</evidence>
<evidence type="ECO:0000269" key="10">
    <source>
    </source>
</evidence>
<evidence type="ECO:0000269" key="11">
    <source>
    </source>
</evidence>
<evidence type="ECO:0000269" key="12">
    <source>
    </source>
</evidence>
<evidence type="ECO:0000269" key="13">
    <source ref="5"/>
</evidence>
<evidence type="ECO:0000303" key="14">
    <source>
    </source>
</evidence>
<evidence type="ECO:0000303" key="15">
    <source>
    </source>
</evidence>
<evidence type="ECO:0000305" key="16"/>
<evidence type="ECO:0007744" key="17">
    <source>
        <dbReference type="PDB" id="2NXP"/>
    </source>
</evidence>
<evidence type="ECO:0007744" key="18">
    <source>
        <dbReference type="PDB" id="7EDX"/>
    </source>
</evidence>
<evidence type="ECO:0007744" key="19">
    <source>
        <dbReference type="PDB" id="7EG7"/>
    </source>
</evidence>
<evidence type="ECO:0007744" key="20">
    <source>
        <dbReference type="PDB" id="7EG8"/>
    </source>
</evidence>
<evidence type="ECO:0007744" key="21">
    <source>
        <dbReference type="PDB" id="7EG9"/>
    </source>
</evidence>
<evidence type="ECO:0007744" key="22">
    <source>
        <dbReference type="PDB" id="7EGA"/>
    </source>
</evidence>
<evidence type="ECO:0007744" key="23">
    <source>
        <dbReference type="PDB" id="7EGB"/>
    </source>
</evidence>
<evidence type="ECO:0007744" key="24">
    <source>
        <dbReference type="PDB" id="7EGC"/>
    </source>
</evidence>
<evidence type="ECO:0007744" key="25">
    <source>
        <dbReference type="PDB" id="7EGD"/>
    </source>
</evidence>
<evidence type="ECO:0007744" key="26">
    <source>
        <dbReference type="PDB" id="7EGE"/>
    </source>
</evidence>
<evidence type="ECO:0007829" key="27">
    <source>
        <dbReference type="PDB" id="2NXP"/>
    </source>
</evidence>
<evidence type="ECO:0007829" key="28">
    <source>
        <dbReference type="PDB" id="6F3T"/>
    </source>
</evidence>
<evidence type="ECO:0007829" key="29">
    <source>
        <dbReference type="PDB" id="7EGF"/>
    </source>
</evidence>
<evidence type="ECO:0007829" key="30">
    <source>
        <dbReference type="PDB" id="7EGG"/>
    </source>
</evidence>